<comment type="function">
    <text evidence="1">NDH-1 shuttles electrons from NADH, via FMN and iron-sulfur (Fe-S) centers, to quinones in the respiratory chain. Couples the redox reaction to proton translocation (for every two electrons transferred, four hydrogen ions are translocated across the cytoplasmic membrane), and thus conserves the redox energy in a proton gradient (By similarity).</text>
</comment>
<comment type="catalytic activity">
    <reaction evidence="2">
        <text>a quinone + NADH + 5 H(+)(in) = a quinol + NAD(+) + 4 H(+)(out)</text>
        <dbReference type="Rhea" id="RHEA:57888"/>
        <dbReference type="ChEBI" id="CHEBI:15378"/>
        <dbReference type="ChEBI" id="CHEBI:24646"/>
        <dbReference type="ChEBI" id="CHEBI:57540"/>
        <dbReference type="ChEBI" id="CHEBI:57945"/>
        <dbReference type="ChEBI" id="CHEBI:132124"/>
    </reaction>
</comment>
<comment type="cofactor">
    <cofactor evidence="2">
        <name>[4Fe-4S] cluster</name>
        <dbReference type="ChEBI" id="CHEBI:49883"/>
    </cofactor>
    <text evidence="2">Binds 1 [4Fe-4S] cluster.</text>
</comment>
<comment type="subunit">
    <text evidence="2">NDH-1 is composed of 14 different subunits. Subunits NuoB, C, D, E, F, and G constitute the peripheral sector of the complex.</text>
</comment>
<comment type="subcellular location">
    <subcellularLocation>
        <location evidence="2">Cell inner membrane</location>
        <topology evidence="2">Peripheral membrane protein</topology>
        <orientation evidence="2">Cytoplasmic side</orientation>
    </subcellularLocation>
</comment>
<comment type="similarity">
    <text evidence="2">Belongs to the complex I 20 kDa subunit family.</text>
</comment>
<accession>A5IHW2</accession>
<feature type="chain" id="PRO_0000358416" description="NADH-quinone oxidoreductase subunit B">
    <location>
        <begin position="1"/>
        <end position="158"/>
    </location>
</feature>
<feature type="binding site" evidence="2">
    <location>
        <position position="37"/>
    </location>
    <ligand>
        <name>[4Fe-4S] cluster</name>
        <dbReference type="ChEBI" id="CHEBI:49883"/>
    </ligand>
</feature>
<feature type="binding site" evidence="2">
    <location>
        <position position="38"/>
    </location>
    <ligand>
        <name>[4Fe-4S] cluster</name>
        <dbReference type="ChEBI" id="CHEBI:49883"/>
    </ligand>
</feature>
<feature type="binding site" evidence="2">
    <location>
        <position position="102"/>
    </location>
    <ligand>
        <name>[4Fe-4S] cluster</name>
        <dbReference type="ChEBI" id="CHEBI:49883"/>
    </ligand>
</feature>
<feature type="binding site" evidence="2">
    <location>
        <position position="132"/>
    </location>
    <ligand>
        <name>[4Fe-4S] cluster</name>
        <dbReference type="ChEBI" id="CHEBI:49883"/>
    </ligand>
</feature>
<proteinExistence type="inferred from homology"/>
<reference key="1">
    <citation type="submission" date="2006-11" db="EMBL/GenBank/DDBJ databases">
        <title>Identification and characterization of a new conjugation/ type IVA secretion system (trb/tra) of L. pneumophila Corby localized on a mobile genomic island.</title>
        <authorList>
            <person name="Gloeckner G."/>
            <person name="Albert-Weissenberger C."/>
            <person name="Weinmann E."/>
            <person name="Jacobi S."/>
            <person name="Schunder E."/>
            <person name="Steinert M."/>
            <person name="Buchrieser C."/>
            <person name="Hacker J."/>
            <person name="Heuner K."/>
        </authorList>
    </citation>
    <scope>NUCLEOTIDE SEQUENCE [LARGE SCALE GENOMIC DNA]</scope>
    <source>
        <strain>Corby</strain>
    </source>
</reference>
<organism>
    <name type="scientific">Legionella pneumophila (strain Corby)</name>
    <dbReference type="NCBI Taxonomy" id="400673"/>
    <lineage>
        <taxon>Bacteria</taxon>
        <taxon>Pseudomonadati</taxon>
        <taxon>Pseudomonadota</taxon>
        <taxon>Gammaproteobacteria</taxon>
        <taxon>Legionellales</taxon>
        <taxon>Legionellaceae</taxon>
        <taxon>Legionella</taxon>
    </lineage>
</organism>
<keyword id="KW-0004">4Fe-4S</keyword>
<keyword id="KW-0997">Cell inner membrane</keyword>
<keyword id="KW-1003">Cell membrane</keyword>
<keyword id="KW-0408">Iron</keyword>
<keyword id="KW-0411">Iron-sulfur</keyword>
<keyword id="KW-0472">Membrane</keyword>
<keyword id="KW-0479">Metal-binding</keyword>
<keyword id="KW-0520">NAD</keyword>
<keyword id="KW-0874">Quinone</keyword>
<keyword id="KW-1278">Translocase</keyword>
<keyword id="KW-0813">Transport</keyword>
<keyword id="KW-0830">Ubiquinone</keyword>
<evidence type="ECO:0000250" key="1"/>
<evidence type="ECO:0000255" key="2">
    <source>
        <dbReference type="HAMAP-Rule" id="MF_01356"/>
    </source>
</evidence>
<gene>
    <name evidence="2" type="primary">nuoB</name>
    <name type="ordered locus">LPC_3074</name>
</gene>
<name>NUOB_LEGPC</name>
<sequence>MAVAELEKKVFELTTVEKLVGWARSGSMWPMTFGLACCAVEMMHVGAARYDLDRFGIIFRPSPRQSDVMIVAGTLCNKMAPALRKVYDQMPEPRWVISMGSCANGGGYYHYSYSVVRGCDRIVPVDVYVPGCPPTAEALLYGIIQLQNKIRRKPVLEA</sequence>
<protein>
    <recommendedName>
        <fullName evidence="2">NADH-quinone oxidoreductase subunit B</fullName>
        <ecNumber evidence="2">7.1.1.-</ecNumber>
    </recommendedName>
    <alternativeName>
        <fullName evidence="2">NADH dehydrogenase I subunit B</fullName>
    </alternativeName>
    <alternativeName>
        <fullName evidence="2">NDH-1 subunit B</fullName>
    </alternativeName>
</protein>
<dbReference type="EC" id="7.1.1.-" evidence="2"/>
<dbReference type="EMBL" id="CP000675">
    <property type="protein sequence ID" value="ABQ56962.1"/>
    <property type="molecule type" value="Genomic_DNA"/>
</dbReference>
<dbReference type="RefSeq" id="WP_011947676.1">
    <property type="nucleotide sequence ID" value="NC_009494.2"/>
</dbReference>
<dbReference type="SMR" id="A5IHW2"/>
<dbReference type="KEGG" id="lpc:LPC_3074"/>
<dbReference type="HOGENOM" id="CLU_055737_7_3_6"/>
<dbReference type="GO" id="GO:0005886">
    <property type="term" value="C:plasma membrane"/>
    <property type="evidence" value="ECO:0007669"/>
    <property type="project" value="UniProtKB-SubCell"/>
</dbReference>
<dbReference type="GO" id="GO:0045271">
    <property type="term" value="C:respiratory chain complex I"/>
    <property type="evidence" value="ECO:0007669"/>
    <property type="project" value="TreeGrafter"/>
</dbReference>
<dbReference type="GO" id="GO:0051539">
    <property type="term" value="F:4 iron, 4 sulfur cluster binding"/>
    <property type="evidence" value="ECO:0007669"/>
    <property type="project" value="UniProtKB-KW"/>
</dbReference>
<dbReference type="GO" id="GO:0005506">
    <property type="term" value="F:iron ion binding"/>
    <property type="evidence" value="ECO:0007669"/>
    <property type="project" value="UniProtKB-UniRule"/>
</dbReference>
<dbReference type="GO" id="GO:0008137">
    <property type="term" value="F:NADH dehydrogenase (ubiquinone) activity"/>
    <property type="evidence" value="ECO:0007669"/>
    <property type="project" value="InterPro"/>
</dbReference>
<dbReference type="GO" id="GO:0050136">
    <property type="term" value="F:NADH:ubiquinone reductase (non-electrogenic) activity"/>
    <property type="evidence" value="ECO:0007669"/>
    <property type="project" value="UniProtKB-UniRule"/>
</dbReference>
<dbReference type="GO" id="GO:0048038">
    <property type="term" value="F:quinone binding"/>
    <property type="evidence" value="ECO:0007669"/>
    <property type="project" value="UniProtKB-KW"/>
</dbReference>
<dbReference type="GO" id="GO:0009060">
    <property type="term" value="P:aerobic respiration"/>
    <property type="evidence" value="ECO:0007669"/>
    <property type="project" value="TreeGrafter"/>
</dbReference>
<dbReference type="GO" id="GO:0015990">
    <property type="term" value="P:electron transport coupled proton transport"/>
    <property type="evidence" value="ECO:0007669"/>
    <property type="project" value="TreeGrafter"/>
</dbReference>
<dbReference type="FunFam" id="3.40.50.12280:FF:000001">
    <property type="entry name" value="NADH-quinone oxidoreductase subunit B 2"/>
    <property type="match status" value="1"/>
</dbReference>
<dbReference type="Gene3D" id="3.40.50.12280">
    <property type="match status" value="1"/>
</dbReference>
<dbReference type="HAMAP" id="MF_01356">
    <property type="entry name" value="NDH1_NuoB"/>
    <property type="match status" value="1"/>
</dbReference>
<dbReference type="InterPro" id="IPR006137">
    <property type="entry name" value="NADH_UbQ_OxRdtase-like_20kDa"/>
</dbReference>
<dbReference type="InterPro" id="IPR006138">
    <property type="entry name" value="NADH_UQ_OxRdtase_20Kd_su"/>
</dbReference>
<dbReference type="NCBIfam" id="TIGR01957">
    <property type="entry name" value="nuoB_fam"/>
    <property type="match status" value="1"/>
</dbReference>
<dbReference type="NCBIfam" id="NF005012">
    <property type="entry name" value="PRK06411.1"/>
    <property type="match status" value="1"/>
</dbReference>
<dbReference type="PANTHER" id="PTHR11995">
    <property type="entry name" value="NADH DEHYDROGENASE"/>
    <property type="match status" value="1"/>
</dbReference>
<dbReference type="PANTHER" id="PTHR11995:SF14">
    <property type="entry name" value="NADH DEHYDROGENASE [UBIQUINONE] IRON-SULFUR PROTEIN 7, MITOCHONDRIAL"/>
    <property type="match status" value="1"/>
</dbReference>
<dbReference type="Pfam" id="PF01058">
    <property type="entry name" value="Oxidored_q6"/>
    <property type="match status" value="1"/>
</dbReference>
<dbReference type="SUPFAM" id="SSF56770">
    <property type="entry name" value="HydA/Nqo6-like"/>
    <property type="match status" value="1"/>
</dbReference>
<dbReference type="PROSITE" id="PS01150">
    <property type="entry name" value="COMPLEX1_20K"/>
    <property type="match status" value="1"/>
</dbReference>